<keyword id="KW-0053">Apoptosis</keyword>
<keyword id="KW-0479">Metal-binding</keyword>
<keyword id="KW-1185">Reference proteome</keyword>
<keyword id="KW-0677">Repeat</keyword>
<keyword id="KW-0862">Zinc</keyword>
<keyword id="KW-0863">Zinc-finger</keyword>
<proteinExistence type="predicted"/>
<organismHost>
    <name type="scientific">Orgyia pseudotsugata</name>
    <name type="common">Douglas-fir tussock moth</name>
    <dbReference type="NCBI Taxonomy" id="33414"/>
</organismHost>
<evidence type="ECO:0000255" key="1">
    <source>
        <dbReference type="PROSITE-ProRule" id="PRU00029"/>
    </source>
</evidence>
<evidence type="ECO:0000255" key="2">
    <source>
        <dbReference type="PROSITE-ProRule" id="PRU00175"/>
    </source>
</evidence>
<gene>
    <name type="primary">IAP1</name>
    <name type="ORF">ORF41</name>
</gene>
<comment type="function">
    <text>Acts by blocking cellular apoptosis rather than by preventing viral stimulation of apoptosis.</text>
</comment>
<organism>
    <name type="scientific">Orgyia pseudotsugata multicapsid polyhedrosis virus</name>
    <name type="common">OpMNPV</name>
    <dbReference type="NCBI Taxonomy" id="262177"/>
    <lineage>
        <taxon>Viruses</taxon>
        <taxon>Viruses incertae sedis</taxon>
        <taxon>Naldaviricetes</taxon>
        <taxon>Lefavirales</taxon>
        <taxon>Baculoviridae</taxon>
        <taxon>Alphabaculovirus</taxon>
        <taxon>Alphabaculovirus orpseudotsugatae</taxon>
    </lineage>
</organism>
<reference key="1">
    <citation type="journal article" date="1997" name="Virology">
        <title>The sequence of the Orgyia pseudotsugata multinucleocapsid nuclear polyhedrosis virus genome.</title>
        <authorList>
            <person name="Ahrens C.H."/>
            <person name="Russell R.R."/>
            <person name="Funk C.J."/>
            <person name="Evans J."/>
            <person name="Harwood S."/>
            <person name="Rohrmann G.F."/>
        </authorList>
    </citation>
    <scope>NUCLEOTIDE SEQUENCE [LARGE SCALE GENOMIC DNA]</scope>
</reference>
<dbReference type="EMBL" id="U75930">
    <property type="protein sequence ID" value="AAC59040.1"/>
    <property type="molecule type" value="Genomic_DNA"/>
</dbReference>
<dbReference type="RefSeq" id="NP_046197.1">
    <property type="nucleotide sequence ID" value="NC_001875.2"/>
</dbReference>
<dbReference type="KEGG" id="vg:912079"/>
<dbReference type="OrthoDB" id="9255at10239"/>
<dbReference type="Proteomes" id="UP000009248">
    <property type="component" value="Genome"/>
</dbReference>
<dbReference type="GO" id="GO:0008270">
    <property type="term" value="F:zinc ion binding"/>
    <property type="evidence" value="ECO:0007669"/>
    <property type="project" value="UniProtKB-KW"/>
</dbReference>
<dbReference type="CDD" id="cd00022">
    <property type="entry name" value="BIR"/>
    <property type="match status" value="2"/>
</dbReference>
<dbReference type="CDD" id="cd16649">
    <property type="entry name" value="mRING-HC-C3HC5_CGRF1-like"/>
    <property type="match status" value="1"/>
</dbReference>
<dbReference type="Gene3D" id="1.10.1170.10">
    <property type="entry name" value="Inhibitor Of Apoptosis Protein (2mihbC-IAP-1), Chain A"/>
    <property type="match status" value="2"/>
</dbReference>
<dbReference type="Gene3D" id="3.30.40.10">
    <property type="entry name" value="Zinc/RING finger domain, C3HC4 (zinc finger)"/>
    <property type="match status" value="1"/>
</dbReference>
<dbReference type="InterPro" id="IPR001370">
    <property type="entry name" value="BIR_rpt"/>
</dbReference>
<dbReference type="InterPro" id="IPR050784">
    <property type="entry name" value="IAP"/>
</dbReference>
<dbReference type="InterPro" id="IPR001841">
    <property type="entry name" value="Znf_RING"/>
</dbReference>
<dbReference type="InterPro" id="IPR013083">
    <property type="entry name" value="Znf_RING/FYVE/PHD"/>
</dbReference>
<dbReference type="PANTHER" id="PTHR10044">
    <property type="entry name" value="INHIBITOR OF APOPTOSIS"/>
    <property type="match status" value="1"/>
</dbReference>
<dbReference type="Pfam" id="PF00653">
    <property type="entry name" value="BIR"/>
    <property type="match status" value="2"/>
</dbReference>
<dbReference type="Pfam" id="PF13920">
    <property type="entry name" value="zf-C3HC4_3"/>
    <property type="match status" value="1"/>
</dbReference>
<dbReference type="SMART" id="SM00238">
    <property type="entry name" value="BIR"/>
    <property type="match status" value="2"/>
</dbReference>
<dbReference type="SMART" id="SM00184">
    <property type="entry name" value="RING"/>
    <property type="match status" value="1"/>
</dbReference>
<dbReference type="SUPFAM" id="SSF57924">
    <property type="entry name" value="Inhibitor of apoptosis (IAP) repeat"/>
    <property type="match status" value="2"/>
</dbReference>
<dbReference type="PROSITE" id="PS01282">
    <property type="entry name" value="BIR_REPEAT_1"/>
    <property type="match status" value="2"/>
</dbReference>
<dbReference type="PROSITE" id="PS50143">
    <property type="entry name" value="BIR_REPEAT_2"/>
    <property type="match status" value="2"/>
</dbReference>
<dbReference type="PROSITE" id="PS50089">
    <property type="entry name" value="ZF_RING_2"/>
    <property type="match status" value="1"/>
</dbReference>
<feature type="chain" id="PRO_0000122370" description="Apoptosis inhibitor 1">
    <location>
        <begin position="1"/>
        <end position="275"/>
    </location>
</feature>
<feature type="repeat" description="BIR 1">
    <location>
        <begin position="24"/>
        <end position="91"/>
    </location>
</feature>
<feature type="repeat" description="BIR 2">
    <location>
        <begin position="126"/>
        <end position="193"/>
    </location>
</feature>
<feature type="zinc finger region" description="RING-type" evidence="2">
    <location>
        <begin position="227"/>
        <end position="263"/>
    </location>
</feature>
<feature type="binding site" evidence="1">
    <location>
        <position position="163"/>
    </location>
    <ligand>
        <name>Zn(2+)</name>
        <dbReference type="ChEBI" id="CHEBI:29105"/>
    </ligand>
</feature>
<feature type="binding site" evidence="1">
    <location>
        <position position="166"/>
    </location>
    <ligand>
        <name>Zn(2+)</name>
        <dbReference type="ChEBI" id="CHEBI:29105"/>
    </ligand>
</feature>
<feature type="binding site" evidence="1">
    <location>
        <position position="183"/>
    </location>
    <ligand>
        <name>Zn(2+)</name>
        <dbReference type="ChEBI" id="CHEBI:29105"/>
    </ligand>
</feature>
<feature type="binding site" evidence="1">
    <location>
        <position position="190"/>
    </location>
    <ligand>
        <name>Zn(2+)</name>
        <dbReference type="ChEBI" id="CHEBI:29105"/>
    </ligand>
</feature>
<accession>O10296</accession>
<sequence>MSAPLYVINVCDHETSAERVFGMLIERHNSFEDYPIDNDAFVNSLIVNGFRYTHVDDAVVCEYCGVVIKNWRENDVVEFVHATLSPYCVYANKIAQNEQFAEDISTDAVVVSPGKPRCVYNRLAHPSARRATFDHWPAALNALTHDIAEAGMFHTMLGDETACFFCDCRVRDWLPGDDPWQRHALANPQCYFVVCVKGDGFCNSERRAETAPGEPAPAFAGSEALECKVCLERQRDAVLLPCRHFCVCMQCYFALDGKCPTCRQDVADFIKIFVT</sequence>
<name>IAP1_NPVOP</name>
<protein>
    <recommendedName>
        <fullName>Apoptosis inhibitor 1</fullName>
    </recommendedName>
    <alternativeName>
        <fullName>IAP-1</fullName>
    </alternativeName>
</protein>